<organism>
    <name type="scientific">Vibrio cholerae serotype O1 (strain ATCC 39541 / Classical Ogawa 395 / O395)</name>
    <dbReference type="NCBI Taxonomy" id="345073"/>
    <lineage>
        <taxon>Bacteria</taxon>
        <taxon>Pseudomonadati</taxon>
        <taxon>Pseudomonadota</taxon>
        <taxon>Gammaproteobacteria</taxon>
        <taxon>Vibrionales</taxon>
        <taxon>Vibrionaceae</taxon>
        <taxon>Vibrio</taxon>
    </lineage>
</organism>
<comment type="function">
    <text evidence="1">The RuvA-RuvB-RuvC complex processes Holliday junction (HJ) DNA during genetic recombination and DNA repair. Endonuclease that resolves HJ intermediates. Cleaves cruciform DNA by making single-stranded nicks across the HJ at symmetrical positions within the homologous arms, yielding a 5'-phosphate and a 3'-hydroxyl group; requires a central core of homology in the junction. The consensus cleavage sequence is 5'-(A/T)TT(C/G)-3'. Cleavage occurs on the 3'-side of the TT dinucleotide at the point of strand exchange. HJ branch migration catalyzed by RuvA-RuvB allows RuvC to scan DNA until it finds its consensus sequence, where it cleaves and resolves the cruciform DNA.</text>
</comment>
<comment type="catalytic activity">
    <reaction evidence="1">
        <text>Endonucleolytic cleavage at a junction such as a reciprocal single-stranded crossover between two homologous DNA duplexes (Holliday junction).</text>
        <dbReference type="EC" id="3.1.21.10"/>
    </reaction>
</comment>
<comment type="cofactor">
    <cofactor evidence="1">
        <name>Mg(2+)</name>
        <dbReference type="ChEBI" id="CHEBI:18420"/>
    </cofactor>
    <text evidence="1">Binds 2 Mg(2+) ion per subunit.</text>
</comment>
<comment type="subunit">
    <text evidence="1">Homodimer which binds Holliday junction (HJ) DNA. The HJ becomes 2-fold symmetrical on binding to RuvC with unstacked arms; it has a different conformation from HJ DNA in complex with RuvA. In the full resolvosome a probable DNA-RuvA(4)-RuvB(12)-RuvC(2) complex forms which resolves the HJ.</text>
</comment>
<comment type="subcellular location">
    <subcellularLocation>
        <location evidence="1">Cytoplasm</location>
    </subcellularLocation>
</comment>
<comment type="similarity">
    <text evidence="1">Belongs to the RuvC family.</text>
</comment>
<dbReference type="EC" id="3.1.21.10" evidence="1"/>
<dbReference type="EMBL" id="CP000627">
    <property type="protein sequence ID" value="ABQ20213.1"/>
    <property type="molecule type" value="Genomic_DNA"/>
</dbReference>
<dbReference type="EMBL" id="CP001235">
    <property type="protein sequence ID" value="ACP09955.1"/>
    <property type="molecule type" value="Genomic_DNA"/>
</dbReference>
<dbReference type="RefSeq" id="WP_000111361.1">
    <property type="nucleotide sequence ID" value="NZ_JAACZH010000001.1"/>
</dbReference>
<dbReference type="SMR" id="A5F762"/>
<dbReference type="KEGG" id="vco:VC0395_A1438"/>
<dbReference type="KEGG" id="vcr:VC395_1962"/>
<dbReference type="PATRIC" id="fig|345073.21.peg.1894"/>
<dbReference type="eggNOG" id="COG0817">
    <property type="taxonomic scope" value="Bacteria"/>
</dbReference>
<dbReference type="HOGENOM" id="CLU_091257_2_1_6"/>
<dbReference type="OrthoDB" id="9805499at2"/>
<dbReference type="Proteomes" id="UP000000249">
    <property type="component" value="Chromosome 2"/>
</dbReference>
<dbReference type="GO" id="GO:0005737">
    <property type="term" value="C:cytoplasm"/>
    <property type="evidence" value="ECO:0007669"/>
    <property type="project" value="UniProtKB-SubCell"/>
</dbReference>
<dbReference type="GO" id="GO:0048476">
    <property type="term" value="C:Holliday junction resolvase complex"/>
    <property type="evidence" value="ECO:0007669"/>
    <property type="project" value="UniProtKB-UniRule"/>
</dbReference>
<dbReference type="GO" id="GO:0008821">
    <property type="term" value="F:crossover junction DNA endonuclease activity"/>
    <property type="evidence" value="ECO:0007669"/>
    <property type="project" value="UniProtKB-UniRule"/>
</dbReference>
<dbReference type="GO" id="GO:0003677">
    <property type="term" value="F:DNA binding"/>
    <property type="evidence" value="ECO:0007669"/>
    <property type="project" value="UniProtKB-KW"/>
</dbReference>
<dbReference type="GO" id="GO:0000287">
    <property type="term" value="F:magnesium ion binding"/>
    <property type="evidence" value="ECO:0007669"/>
    <property type="project" value="UniProtKB-UniRule"/>
</dbReference>
<dbReference type="GO" id="GO:0006310">
    <property type="term" value="P:DNA recombination"/>
    <property type="evidence" value="ECO:0007669"/>
    <property type="project" value="UniProtKB-UniRule"/>
</dbReference>
<dbReference type="GO" id="GO:0006281">
    <property type="term" value="P:DNA repair"/>
    <property type="evidence" value="ECO:0007669"/>
    <property type="project" value="UniProtKB-UniRule"/>
</dbReference>
<dbReference type="CDD" id="cd16962">
    <property type="entry name" value="RuvC"/>
    <property type="match status" value="1"/>
</dbReference>
<dbReference type="FunFam" id="3.30.420.10:FF:000002">
    <property type="entry name" value="Crossover junction endodeoxyribonuclease RuvC"/>
    <property type="match status" value="1"/>
</dbReference>
<dbReference type="Gene3D" id="3.30.420.10">
    <property type="entry name" value="Ribonuclease H-like superfamily/Ribonuclease H"/>
    <property type="match status" value="1"/>
</dbReference>
<dbReference type="HAMAP" id="MF_00034">
    <property type="entry name" value="RuvC"/>
    <property type="match status" value="1"/>
</dbReference>
<dbReference type="InterPro" id="IPR012337">
    <property type="entry name" value="RNaseH-like_sf"/>
</dbReference>
<dbReference type="InterPro" id="IPR036397">
    <property type="entry name" value="RNaseH_sf"/>
</dbReference>
<dbReference type="InterPro" id="IPR020563">
    <property type="entry name" value="X-over_junc_endoDNase_Mg_BS"/>
</dbReference>
<dbReference type="InterPro" id="IPR002176">
    <property type="entry name" value="X-over_junc_endoDNase_RuvC"/>
</dbReference>
<dbReference type="NCBIfam" id="TIGR00228">
    <property type="entry name" value="ruvC"/>
    <property type="match status" value="1"/>
</dbReference>
<dbReference type="PANTHER" id="PTHR30194">
    <property type="entry name" value="CROSSOVER JUNCTION ENDODEOXYRIBONUCLEASE RUVC"/>
    <property type="match status" value="1"/>
</dbReference>
<dbReference type="PANTHER" id="PTHR30194:SF3">
    <property type="entry name" value="CROSSOVER JUNCTION ENDODEOXYRIBONUCLEASE RUVC"/>
    <property type="match status" value="1"/>
</dbReference>
<dbReference type="Pfam" id="PF02075">
    <property type="entry name" value="RuvC"/>
    <property type="match status" value="1"/>
</dbReference>
<dbReference type="PRINTS" id="PR00696">
    <property type="entry name" value="RSOLVASERUVC"/>
</dbReference>
<dbReference type="SUPFAM" id="SSF53098">
    <property type="entry name" value="Ribonuclease H-like"/>
    <property type="match status" value="1"/>
</dbReference>
<dbReference type="PROSITE" id="PS01321">
    <property type="entry name" value="RUVC"/>
    <property type="match status" value="1"/>
</dbReference>
<evidence type="ECO:0000255" key="1">
    <source>
        <dbReference type="HAMAP-Rule" id="MF_00034"/>
    </source>
</evidence>
<accession>A5F762</accession>
<accession>C3M1N9</accession>
<name>RUVC_VIBC3</name>
<proteinExistence type="inferred from homology"/>
<gene>
    <name evidence="1" type="primary">ruvC</name>
    <name type="ordered locus">VC0395_A1438</name>
    <name type="ordered locus">VC395_1962</name>
</gene>
<sequence>MSVILGIDPGSRVTGYGVIRQQGRHLIYLGSGCIRTSDLELPLRLKQIYAGVSEIITQFQPDAFAIEQVFMAKNADSALKLGQARGSAIVAAVNAELPVYEYAARLIKQAVVGTGAADKSQVQHMVQQMLKLPGKPQADAADALGVAICHANTNKTLIALAGQATSARRGRYR</sequence>
<keyword id="KW-0963">Cytoplasm</keyword>
<keyword id="KW-0227">DNA damage</keyword>
<keyword id="KW-0233">DNA recombination</keyword>
<keyword id="KW-0234">DNA repair</keyword>
<keyword id="KW-0238">DNA-binding</keyword>
<keyword id="KW-0255">Endonuclease</keyword>
<keyword id="KW-0378">Hydrolase</keyword>
<keyword id="KW-0460">Magnesium</keyword>
<keyword id="KW-0479">Metal-binding</keyword>
<keyword id="KW-0540">Nuclease</keyword>
<protein>
    <recommendedName>
        <fullName evidence="1">Crossover junction endodeoxyribonuclease RuvC</fullName>
        <ecNumber evidence="1">3.1.21.10</ecNumber>
    </recommendedName>
    <alternativeName>
        <fullName evidence="1">Holliday junction nuclease RuvC</fullName>
    </alternativeName>
    <alternativeName>
        <fullName evidence="1">Holliday junction resolvase RuvC</fullName>
    </alternativeName>
</protein>
<reference key="1">
    <citation type="submission" date="2007-03" db="EMBL/GenBank/DDBJ databases">
        <authorList>
            <person name="Heidelberg J."/>
        </authorList>
    </citation>
    <scope>NUCLEOTIDE SEQUENCE [LARGE SCALE GENOMIC DNA]</scope>
    <source>
        <strain>ATCC 39541 / Classical Ogawa 395 / O395</strain>
    </source>
</reference>
<reference key="2">
    <citation type="journal article" date="2008" name="PLoS ONE">
        <title>A recalibrated molecular clock and independent origins for the cholera pandemic clones.</title>
        <authorList>
            <person name="Feng L."/>
            <person name="Reeves P.R."/>
            <person name="Lan R."/>
            <person name="Ren Y."/>
            <person name="Gao C."/>
            <person name="Zhou Z."/>
            <person name="Ren Y."/>
            <person name="Cheng J."/>
            <person name="Wang W."/>
            <person name="Wang J."/>
            <person name="Qian W."/>
            <person name="Li D."/>
            <person name="Wang L."/>
        </authorList>
    </citation>
    <scope>NUCLEOTIDE SEQUENCE [LARGE SCALE GENOMIC DNA]</scope>
    <source>
        <strain>ATCC 39541 / Classical Ogawa 395 / O395</strain>
    </source>
</reference>
<feature type="chain" id="PRO_1000071037" description="Crossover junction endodeoxyribonuclease RuvC">
    <location>
        <begin position="1"/>
        <end position="173"/>
    </location>
</feature>
<feature type="active site" evidence="1">
    <location>
        <position position="8"/>
    </location>
</feature>
<feature type="active site" evidence="1">
    <location>
        <position position="67"/>
    </location>
</feature>
<feature type="active site" evidence="1">
    <location>
        <position position="139"/>
    </location>
</feature>
<feature type="binding site" evidence="1">
    <location>
        <position position="8"/>
    </location>
    <ligand>
        <name>Mg(2+)</name>
        <dbReference type="ChEBI" id="CHEBI:18420"/>
        <label>1</label>
    </ligand>
</feature>
<feature type="binding site" evidence="1">
    <location>
        <position position="67"/>
    </location>
    <ligand>
        <name>Mg(2+)</name>
        <dbReference type="ChEBI" id="CHEBI:18420"/>
        <label>2</label>
    </ligand>
</feature>
<feature type="binding site" evidence="1">
    <location>
        <position position="139"/>
    </location>
    <ligand>
        <name>Mg(2+)</name>
        <dbReference type="ChEBI" id="CHEBI:18420"/>
        <label>1</label>
    </ligand>
</feature>